<organism>
    <name type="scientific">Xenopus laevis</name>
    <name type="common">African clawed frog</name>
    <dbReference type="NCBI Taxonomy" id="8355"/>
    <lineage>
        <taxon>Eukaryota</taxon>
        <taxon>Metazoa</taxon>
        <taxon>Chordata</taxon>
        <taxon>Craniata</taxon>
        <taxon>Vertebrata</taxon>
        <taxon>Euteleostomi</taxon>
        <taxon>Amphibia</taxon>
        <taxon>Batrachia</taxon>
        <taxon>Anura</taxon>
        <taxon>Pipoidea</taxon>
        <taxon>Pipidae</taxon>
        <taxon>Xenopodinae</taxon>
        <taxon>Xenopus</taxon>
        <taxon>Xenopus</taxon>
    </lineage>
</organism>
<comment type="function">
    <text>May be involved in forming the receptor site for cardiac glycoside binding or may modulate the transport function of the sodium ATPase.</text>
</comment>
<comment type="subunit">
    <text evidence="2">Regulatory subunit of the sodium/potassium-transporting ATPase which is composed of a catalytic alpha subunit, an auxiliary non-catalytic beta subunit and an additional regulatory subunit.</text>
</comment>
<comment type="subcellular location">
    <subcellularLocation>
        <location evidence="3">Membrane</location>
        <topology evidence="3">Single-pass type III membrane protein</topology>
    </subcellularLocation>
</comment>
<comment type="similarity">
    <text evidence="3">Belongs to the FXYD family.</text>
</comment>
<protein>
    <recommendedName>
        <fullName>Sodium/potassium-transporting ATPase subunit gamma</fullName>
        <shortName>Na(+)/K(+) ATPase subunit gamma</shortName>
    </recommendedName>
    <alternativeName>
        <fullName>FXYD domain-containing ion transport regulator 2</fullName>
    </alternativeName>
    <alternativeName>
        <fullName>Sodium pump gamma chain</fullName>
    </alternativeName>
</protein>
<feature type="chain" id="PRO_0000148189" description="Sodium/potassium-transporting ATPase subunit gamma">
    <location>
        <begin position="1"/>
        <end position="61"/>
    </location>
</feature>
<feature type="transmembrane region" description="Helical" evidence="1">
    <location>
        <begin position="24"/>
        <end position="44"/>
    </location>
</feature>
<name>ATNG_XENLA</name>
<sequence>MADAQDDMSQMQDKFTYDYETIRKGGLIFAAIAFVVGMLIIFSGRFRCGRKKQLRALNDDM</sequence>
<evidence type="ECO:0000255" key="1"/>
<evidence type="ECO:0000269" key="2">
    <source>
    </source>
</evidence>
<evidence type="ECO:0000305" key="3"/>
<keyword id="KW-0406">Ion transport</keyword>
<keyword id="KW-0472">Membrane</keyword>
<keyword id="KW-0630">Potassium</keyword>
<keyword id="KW-0633">Potassium transport</keyword>
<keyword id="KW-1185">Reference proteome</keyword>
<keyword id="KW-0915">Sodium</keyword>
<keyword id="KW-0739">Sodium transport</keyword>
<keyword id="KW-0740">Sodium/potassium transport</keyword>
<keyword id="KW-0812">Transmembrane</keyword>
<keyword id="KW-1133">Transmembrane helix</keyword>
<keyword id="KW-0813">Transport</keyword>
<proteinExistence type="evidence at protein level"/>
<accession>O13001</accession>
<dbReference type="EMBL" id="Y11587">
    <property type="protein sequence ID" value="CAA72326.1"/>
    <property type="molecule type" value="mRNA"/>
</dbReference>
<dbReference type="RefSeq" id="NP_001081551.1">
    <property type="nucleotide sequence ID" value="NM_001088082.2"/>
</dbReference>
<dbReference type="SMR" id="O13001"/>
<dbReference type="GeneID" id="397916"/>
<dbReference type="KEGG" id="xla:397916"/>
<dbReference type="AGR" id="Xenbase:XB-GENE-864939"/>
<dbReference type="CTD" id="397916"/>
<dbReference type="Xenbase" id="XB-GENE-864939">
    <property type="gene designation" value="fxyd2.S"/>
</dbReference>
<dbReference type="OrthoDB" id="8430468at2759"/>
<dbReference type="Proteomes" id="UP000186698">
    <property type="component" value="Chromosome 7S"/>
</dbReference>
<dbReference type="Bgee" id="397916">
    <property type="expression patterns" value="Expressed in kidney and 16 other cell types or tissues"/>
</dbReference>
<dbReference type="GO" id="GO:0016020">
    <property type="term" value="C:membrane"/>
    <property type="evidence" value="ECO:0007669"/>
    <property type="project" value="UniProtKB-SubCell"/>
</dbReference>
<dbReference type="GO" id="GO:0017080">
    <property type="term" value="F:sodium channel regulator activity"/>
    <property type="evidence" value="ECO:0007669"/>
    <property type="project" value="TreeGrafter"/>
</dbReference>
<dbReference type="GO" id="GO:0006813">
    <property type="term" value="P:potassium ion transport"/>
    <property type="evidence" value="ECO:0007669"/>
    <property type="project" value="UniProtKB-KW"/>
</dbReference>
<dbReference type="GO" id="GO:0043269">
    <property type="term" value="P:regulation of monoatomic ion transport"/>
    <property type="evidence" value="ECO:0007669"/>
    <property type="project" value="InterPro"/>
</dbReference>
<dbReference type="GO" id="GO:0006814">
    <property type="term" value="P:sodium ion transport"/>
    <property type="evidence" value="ECO:0007669"/>
    <property type="project" value="UniProtKB-KW"/>
</dbReference>
<dbReference type="CDD" id="cd20318">
    <property type="entry name" value="FXYD2"/>
    <property type="match status" value="1"/>
</dbReference>
<dbReference type="FunFam" id="1.20.5.780:FF:000011">
    <property type="entry name" value="FXYD domain-containing ion transport regulator"/>
    <property type="match status" value="1"/>
</dbReference>
<dbReference type="Gene3D" id="1.20.5.780">
    <property type="entry name" value="Single helix bin"/>
    <property type="match status" value="1"/>
</dbReference>
<dbReference type="InterPro" id="IPR047282">
    <property type="entry name" value="ATNG"/>
</dbReference>
<dbReference type="InterPro" id="IPR047297">
    <property type="entry name" value="FXYD_motif"/>
</dbReference>
<dbReference type="InterPro" id="IPR000272">
    <property type="entry name" value="Ion-transport_regulator_FXYD"/>
</dbReference>
<dbReference type="PANTHER" id="PTHR14132">
    <property type="entry name" value="SODIUM/POTASSIUM-TRANSPORTING ATPASE SUBUNIT GAMMA"/>
    <property type="match status" value="1"/>
</dbReference>
<dbReference type="PANTHER" id="PTHR14132:SF3">
    <property type="entry name" value="SODIUM_POTASSIUM-TRANSPORTING ATPASE SUBUNIT GAMMA"/>
    <property type="match status" value="1"/>
</dbReference>
<dbReference type="Pfam" id="PF02038">
    <property type="entry name" value="ATP1G1_PLM_MAT8"/>
    <property type="match status" value="1"/>
</dbReference>
<dbReference type="PROSITE" id="PS01310">
    <property type="entry name" value="FXYD"/>
    <property type="match status" value="1"/>
</dbReference>
<gene>
    <name type="primary">fxyd2</name>
</gene>
<reference key="1">
    <citation type="journal article" date="1997" name="EMBO J.">
        <title>The gamma subunit is a specific component of the Na,K-ATPase and modulates its transport function.</title>
        <authorList>
            <person name="Beguin P."/>
            <person name="Wang X."/>
            <person name="Firsov D."/>
            <person name="Puoti A."/>
            <person name="Claeys D."/>
            <person name="Horisberger J.-D."/>
            <person name="Geering K."/>
        </authorList>
    </citation>
    <scope>NUCLEOTIDE SEQUENCE [MRNA]</scope>
    <scope>IDENTIFICATION IN SODIUM/POTASSIUM-TRANSPORTING ATPASE COMPLEX</scope>
    <source>
        <tissue>Kidney</tissue>
    </source>
</reference>